<organism>
    <name type="scientific">Natranaerobius thermophilus (strain ATCC BAA-1301 / DSM 18059 / JW/NM-WN-LF)</name>
    <dbReference type="NCBI Taxonomy" id="457570"/>
    <lineage>
        <taxon>Bacteria</taxon>
        <taxon>Bacillati</taxon>
        <taxon>Bacillota</taxon>
        <taxon>Clostridia</taxon>
        <taxon>Natranaerobiales</taxon>
        <taxon>Natranaerobiaceae</taxon>
        <taxon>Natranaerobius</taxon>
    </lineage>
</organism>
<dbReference type="EC" id="3.1.1.96" evidence="1"/>
<dbReference type="EMBL" id="CP001034">
    <property type="protein sequence ID" value="ACB84872.1"/>
    <property type="molecule type" value="Genomic_DNA"/>
</dbReference>
<dbReference type="RefSeq" id="WP_012447747.1">
    <property type="nucleotide sequence ID" value="NC_010718.1"/>
</dbReference>
<dbReference type="SMR" id="B2A2F7"/>
<dbReference type="FunCoup" id="B2A2F7">
    <property type="interactions" value="316"/>
</dbReference>
<dbReference type="STRING" id="457570.Nther_1289"/>
<dbReference type="KEGG" id="nth:Nther_1289"/>
<dbReference type="eggNOG" id="COG1490">
    <property type="taxonomic scope" value="Bacteria"/>
</dbReference>
<dbReference type="HOGENOM" id="CLU_076901_1_0_9"/>
<dbReference type="InParanoid" id="B2A2F7"/>
<dbReference type="OrthoDB" id="9801395at2"/>
<dbReference type="Proteomes" id="UP000001683">
    <property type="component" value="Chromosome"/>
</dbReference>
<dbReference type="GO" id="GO:0005737">
    <property type="term" value="C:cytoplasm"/>
    <property type="evidence" value="ECO:0007669"/>
    <property type="project" value="UniProtKB-SubCell"/>
</dbReference>
<dbReference type="GO" id="GO:0051500">
    <property type="term" value="F:D-tyrosyl-tRNA(Tyr) deacylase activity"/>
    <property type="evidence" value="ECO:0007669"/>
    <property type="project" value="TreeGrafter"/>
</dbReference>
<dbReference type="GO" id="GO:0106026">
    <property type="term" value="F:Gly-tRNA(Ala) deacylase activity"/>
    <property type="evidence" value="ECO:0007669"/>
    <property type="project" value="UniProtKB-UniRule"/>
</dbReference>
<dbReference type="GO" id="GO:0043908">
    <property type="term" value="F:Ser(Gly)-tRNA(Ala) hydrolase activity"/>
    <property type="evidence" value="ECO:0007669"/>
    <property type="project" value="UniProtKB-UniRule"/>
</dbReference>
<dbReference type="GO" id="GO:0000049">
    <property type="term" value="F:tRNA binding"/>
    <property type="evidence" value="ECO:0007669"/>
    <property type="project" value="UniProtKB-UniRule"/>
</dbReference>
<dbReference type="GO" id="GO:0019478">
    <property type="term" value="P:D-amino acid catabolic process"/>
    <property type="evidence" value="ECO:0007669"/>
    <property type="project" value="UniProtKB-UniRule"/>
</dbReference>
<dbReference type="CDD" id="cd00563">
    <property type="entry name" value="Dtyr_deacylase"/>
    <property type="match status" value="1"/>
</dbReference>
<dbReference type="FunFam" id="3.50.80.10:FF:000001">
    <property type="entry name" value="D-aminoacyl-tRNA deacylase"/>
    <property type="match status" value="1"/>
</dbReference>
<dbReference type="Gene3D" id="3.50.80.10">
    <property type="entry name" value="D-tyrosyl-tRNA(Tyr) deacylase"/>
    <property type="match status" value="1"/>
</dbReference>
<dbReference type="HAMAP" id="MF_00518">
    <property type="entry name" value="Deacylase_Dtd"/>
    <property type="match status" value="1"/>
</dbReference>
<dbReference type="InterPro" id="IPR003732">
    <property type="entry name" value="Daa-tRNA_deacyls_DTD"/>
</dbReference>
<dbReference type="InterPro" id="IPR023509">
    <property type="entry name" value="DTD-like_sf"/>
</dbReference>
<dbReference type="NCBIfam" id="TIGR00256">
    <property type="entry name" value="D-aminoacyl-tRNA deacylase"/>
    <property type="match status" value="1"/>
</dbReference>
<dbReference type="PANTHER" id="PTHR10472:SF5">
    <property type="entry name" value="D-AMINOACYL-TRNA DEACYLASE 1"/>
    <property type="match status" value="1"/>
</dbReference>
<dbReference type="PANTHER" id="PTHR10472">
    <property type="entry name" value="D-TYROSYL-TRNA TYR DEACYLASE"/>
    <property type="match status" value="1"/>
</dbReference>
<dbReference type="Pfam" id="PF02580">
    <property type="entry name" value="Tyr_Deacylase"/>
    <property type="match status" value="1"/>
</dbReference>
<dbReference type="SUPFAM" id="SSF69500">
    <property type="entry name" value="DTD-like"/>
    <property type="match status" value="1"/>
</dbReference>
<comment type="function">
    <text evidence="1">An aminoacyl-tRNA editing enzyme that deacylates mischarged D-aminoacyl-tRNAs. Also deacylates mischarged glycyl-tRNA(Ala), protecting cells against glycine mischarging by AlaRS. Acts via tRNA-based rather than protein-based catalysis; rejects L-amino acids rather than detecting D-amino acids in the active site. By recycling D-aminoacyl-tRNA to D-amino acids and free tRNA molecules, this enzyme counteracts the toxicity associated with the formation of D-aminoacyl-tRNA entities in vivo and helps enforce protein L-homochirality.</text>
</comment>
<comment type="catalytic activity">
    <reaction evidence="1">
        <text>glycyl-tRNA(Ala) + H2O = tRNA(Ala) + glycine + H(+)</text>
        <dbReference type="Rhea" id="RHEA:53744"/>
        <dbReference type="Rhea" id="RHEA-COMP:9657"/>
        <dbReference type="Rhea" id="RHEA-COMP:13640"/>
        <dbReference type="ChEBI" id="CHEBI:15377"/>
        <dbReference type="ChEBI" id="CHEBI:15378"/>
        <dbReference type="ChEBI" id="CHEBI:57305"/>
        <dbReference type="ChEBI" id="CHEBI:78442"/>
        <dbReference type="ChEBI" id="CHEBI:78522"/>
        <dbReference type="EC" id="3.1.1.96"/>
    </reaction>
</comment>
<comment type="catalytic activity">
    <reaction evidence="1">
        <text>a D-aminoacyl-tRNA + H2O = a tRNA + a D-alpha-amino acid + H(+)</text>
        <dbReference type="Rhea" id="RHEA:13953"/>
        <dbReference type="Rhea" id="RHEA-COMP:10123"/>
        <dbReference type="Rhea" id="RHEA-COMP:10124"/>
        <dbReference type="ChEBI" id="CHEBI:15377"/>
        <dbReference type="ChEBI" id="CHEBI:15378"/>
        <dbReference type="ChEBI" id="CHEBI:59871"/>
        <dbReference type="ChEBI" id="CHEBI:78442"/>
        <dbReference type="ChEBI" id="CHEBI:79333"/>
        <dbReference type="EC" id="3.1.1.96"/>
    </reaction>
</comment>
<comment type="subunit">
    <text evidence="1">Homodimer.</text>
</comment>
<comment type="subcellular location">
    <subcellularLocation>
        <location evidence="1">Cytoplasm</location>
    </subcellularLocation>
</comment>
<comment type="domain">
    <text evidence="1">A Gly-cisPro motif from one monomer fits into the active site of the other monomer to allow specific chiral rejection of L-amino acids.</text>
</comment>
<comment type="similarity">
    <text evidence="1">Belongs to the DTD family.</text>
</comment>
<reference key="1">
    <citation type="submission" date="2008-04" db="EMBL/GenBank/DDBJ databases">
        <title>Complete sequence of chromosome of Natranaerobius thermophilus JW/NM-WN-LF.</title>
        <authorList>
            <consortium name="US DOE Joint Genome Institute"/>
            <person name="Copeland A."/>
            <person name="Lucas S."/>
            <person name="Lapidus A."/>
            <person name="Glavina del Rio T."/>
            <person name="Dalin E."/>
            <person name="Tice H."/>
            <person name="Bruce D."/>
            <person name="Goodwin L."/>
            <person name="Pitluck S."/>
            <person name="Chertkov O."/>
            <person name="Brettin T."/>
            <person name="Detter J.C."/>
            <person name="Han C."/>
            <person name="Kuske C.R."/>
            <person name="Schmutz J."/>
            <person name="Larimer F."/>
            <person name="Land M."/>
            <person name="Hauser L."/>
            <person name="Kyrpides N."/>
            <person name="Lykidis A."/>
            <person name="Mesbah N.M."/>
            <person name="Wiegel J."/>
        </authorList>
    </citation>
    <scope>NUCLEOTIDE SEQUENCE [LARGE SCALE GENOMIC DNA]</scope>
    <source>
        <strain>ATCC BAA-1301 / DSM 18059 / JW/NM-WN-LF</strain>
    </source>
</reference>
<protein>
    <recommendedName>
        <fullName evidence="1">D-aminoacyl-tRNA deacylase</fullName>
        <shortName evidence="1">DTD</shortName>
        <ecNumber evidence="1">3.1.1.96</ecNumber>
    </recommendedName>
    <alternativeName>
        <fullName evidence="1">Gly-tRNA(Ala) deacylase</fullName>
    </alternativeName>
</protein>
<feature type="chain" id="PRO_1000127554" description="D-aminoacyl-tRNA deacylase">
    <location>
        <begin position="1"/>
        <end position="150"/>
    </location>
</feature>
<feature type="short sequence motif" description="Gly-cisPro motif, important for rejection of L-amino acids" evidence="1">
    <location>
        <begin position="138"/>
        <end position="139"/>
    </location>
</feature>
<accession>B2A2F7</accession>
<sequence length="150" mass="16683">MRAVVQRVSKSYVNVNGEKVGEINQGLNVLLGVEDGDGEDDIKYLVDKIVNLRIFEDDQGKMNLSVNDIGGELLVISQFTLLGDCRKGRRPNFMKAASPEIADELYQKFVEKVSKDYGLSLATGSFKEHMEVDILNDGPVTILLDSNKKF</sequence>
<keyword id="KW-0963">Cytoplasm</keyword>
<keyword id="KW-0378">Hydrolase</keyword>
<keyword id="KW-1185">Reference proteome</keyword>
<keyword id="KW-0694">RNA-binding</keyword>
<keyword id="KW-0820">tRNA-binding</keyword>
<gene>
    <name evidence="1" type="primary">dtd</name>
    <name type="ordered locus">Nther_1289</name>
</gene>
<proteinExistence type="inferred from homology"/>
<name>DTD_NATTJ</name>
<evidence type="ECO:0000255" key="1">
    <source>
        <dbReference type="HAMAP-Rule" id="MF_00518"/>
    </source>
</evidence>